<reference key="1">
    <citation type="journal article" date="2009" name="PLoS ONE">
        <title>Genome degradation in Brucella ovis corresponds with narrowing of its host range and tissue tropism.</title>
        <authorList>
            <person name="Tsolis R.M."/>
            <person name="Seshadri R."/>
            <person name="Santos R.L."/>
            <person name="Sangari F.J."/>
            <person name="Lobo J.M."/>
            <person name="de Jong M.F."/>
            <person name="Ren Q."/>
            <person name="Myers G."/>
            <person name="Brinkac L.M."/>
            <person name="Nelson W.C."/>
            <person name="Deboy R.T."/>
            <person name="Angiuoli S."/>
            <person name="Khouri H."/>
            <person name="Dimitrov G."/>
            <person name="Robinson J.R."/>
            <person name="Mulligan S."/>
            <person name="Walker R.L."/>
            <person name="Elzer P.E."/>
            <person name="Hassan K.A."/>
            <person name="Paulsen I.T."/>
        </authorList>
    </citation>
    <scope>NUCLEOTIDE SEQUENCE [LARGE SCALE GENOMIC DNA]</scope>
    <source>
        <strain>ATCC 25840 / 63/290 / NCTC 10512</strain>
    </source>
</reference>
<dbReference type="EC" id="1.8.4.11" evidence="1"/>
<dbReference type="EMBL" id="CP000709">
    <property type="protein sequence ID" value="ABQ62887.1"/>
    <property type="molecule type" value="Genomic_DNA"/>
</dbReference>
<dbReference type="RefSeq" id="WP_002965585.1">
    <property type="nucleotide sequence ID" value="NC_009504.1"/>
</dbReference>
<dbReference type="SMR" id="A5VVX1"/>
<dbReference type="GeneID" id="97534887"/>
<dbReference type="KEGG" id="bov:BOV_A1007"/>
<dbReference type="HOGENOM" id="CLU_031040_10_3_5"/>
<dbReference type="PhylomeDB" id="A5VVX1"/>
<dbReference type="Proteomes" id="UP000006383">
    <property type="component" value="Chromosome II"/>
</dbReference>
<dbReference type="GO" id="GO:0005737">
    <property type="term" value="C:cytoplasm"/>
    <property type="evidence" value="ECO:0007669"/>
    <property type="project" value="TreeGrafter"/>
</dbReference>
<dbReference type="GO" id="GO:0036456">
    <property type="term" value="F:L-methionine-(S)-S-oxide reductase activity"/>
    <property type="evidence" value="ECO:0007669"/>
    <property type="project" value="TreeGrafter"/>
</dbReference>
<dbReference type="GO" id="GO:0008113">
    <property type="term" value="F:peptide-methionine (S)-S-oxide reductase activity"/>
    <property type="evidence" value="ECO:0007669"/>
    <property type="project" value="UniProtKB-UniRule"/>
</dbReference>
<dbReference type="GO" id="GO:0034599">
    <property type="term" value="P:cellular response to oxidative stress"/>
    <property type="evidence" value="ECO:0007669"/>
    <property type="project" value="TreeGrafter"/>
</dbReference>
<dbReference type="GO" id="GO:0036211">
    <property type="term" value="P:protein modification process"/>
    <property type="evidence" value="ECO:0007669"/>
    <property type="project" value="UniProtKB-UniRule"/>
</dbReference>
<dbReference type="FunFam" id="3.30.1060.10:FF:000001">
    <property type="entry name" value="Peptide methionine sulfoxide reductase MsrA"/>
    <property type="match status" value="1"/>
</dbReference>
<dbReference type="Gene3D" id="3.30.1060.10">
    <property type="entry name" value="Peptide methionine sulphoxide reductase MsrA"/>
    <property type="match status" value="1"/>
</dbReference>
<dbReference type="HAMAP" id="MF_01401">
    <property type="entry name" value="MsrA"/>
    <property type="match status" value="1"/>
</dbReference>
<dbReference type="InterPro" id="IPR002569">
    <property type="entry name" value="Met_Sox_Rdtase_MsrA_dom"/>
</dbReference>
<dbReference type="InterPro" id="IPR036509">
    <property type="entry name" value="Met_Sox_Rdtase_MsrA_sf"/>
</dbReference>
<dbReference type="InterPro" id="IPR050162">
    <property type="entry name" value="MsrA_MetSO_reductase"/>
</dbReference>
<dbReference type="NCBIfam" id="TIGR00401">
    <property type="entry name" value="msrA"/>
    <property type="match status" value="1"/>
</dbReference>
<dbReference type="PANTHER" id="PTHR42799">
    <property type="entry name" value="MITOCHONDRIAL PEPTIDE METHIONINE SULFOXIDE REDUCTASE"/>
    <property type="match status" value="1"/>
</dbReference>
<dbReference type="PANTHER" id="PTHR42799:SF2">
    <property type="entry name" value="MITOCHONDRIAL PEPTIDE METHIONINE SULFOXIDE REDUCTASE"/>
    <property type="match status" value="1"/>
</dbReference>
<dbReference type="Pfam" id="PF01625">
    <property type="entry name" value="PMSR"/>
    <property type="match status" value="1"/>
</dbReference>
<dbReference type="SUPFAM" id="SSF55068">
    <property type="entry name" value="Peptide methionine sulfoxide reductase"/>
    <property type="match status" value="1"/>
</dbReference>
<gene>
    <name evidence="1" type="primary">msrA</name>
    <name type="ordered locus">BOV_A1007</name>
</gene>
<proteinExistence type="inferred from homology"/>
<keyword id="KW-0560">Oxidoreductase</keyword>
<accession>A5VVX1</accession>
<feature type="chain" id="PRO_1000068313" description="Peptide methionine sulfoxide reductase MsrA">
    <location>
        <begin position="1"/>
        <end position="218"/>
    </location>
</feature>
<feature type="active site" evidence="1">
    <location>
        <position position="57"/>
    </location>
</feature>
<protein>
    <recommendedName>
        <fullName evidence="1">Peptide methionine sulfoxide reductase MsrA</fullName>
        <shortName evidence="1">Protein-methionine-S-oxide reductase</shortName>
        <ecNumber evidence="1">1.8.4.11</ecNumber>
    </recommendedName>
    <alternativeName>
        <fullName evidence="1">Peptide-methionine (S)-S-oxide reductase</fullName>
        <shortName evidence="1">Peptide Met(O) reductase</shortName>
    </alternativeName>
</protein>
<organism>
    <name type="scientific">Brucella ovis (strain ATCC 25840 / 63/290 / NCTC 10512)</name>
    <dbReference type="NCBI Taxonomy" id="444178"/>
    <lineage>
        <taxon>Bacteria</taxon>
        <taxon>Pseudomonadati</taxon>
        <taxon>Pseudomonadota</taxon>
        <taxon>Alphaproteobacteria</taxon>
        <taxon>Hyphomicrobiales</taxon>
        <taxon>Brucellaceae</taxon>
        <taxon>Brucella/Ochrobactrum group</taxon>
        <taxon>Brucella</taxon>
    </lineage>
</organism>
<evidence type="ECO:0000255" key="1">
    <source>
        <dbReference type="HAMAP-Rule" id="MF_01401"/>
    </source>
</evidence>
<comment type="function">
    <text evidence="1">Has an important function as a repair enzyme for proteins that have been inactivated by oxidation. Catalyzes the reversible oxidation-reduction of methionine sulfoxide in proteins to methionine.</text>
</comment>
<comment type="catalytic activity">
    <reaction evidence="1">
        <text>L-methionyl-[protein] + [thioredoxin]-disulfide + H2O = L-methionyl-(S)-S-oxide-[protein] + [thioredoxin]-dithiol</text>
        <dbReference type="Rhea" id="RHEA:14217"/>
        <dbReference type="Rhea" id="RHEA-COMP:10698"/>
        <dbReference type="Rhea" id="RHEA-COMP:10700"/>
        <dbReference type="Rhea" id="RHEA-COMP:12313"/>
        <dbReference type="Rhea" id="RHEA-COMP:12315"/>
        <dbReference type="ChEBI" id="CHEBI:15377"/>
        <dbReference type="ChEBI" id="CHEBI:16044"/>
        <dbReference type="ChEBI" id="CHEBI:29950"/>
        <dbReference type="ChEBI" id="CHEBI:44120"/>
        <dbReference type="ChEBI" id="CHEBI:50058"/>
        <dbReference type="EC" id="1.8.4.11"/>
    </reaction>
</comment>
<comment type="catalytic activity">
    <reaction evidence="1">
        <text>[thioredoxin]-disulfide + L-methionine + H2O = L-methionine (S)-S-oxide + [thioredoxin]-dithiol</text>
        <dbReference type="Rhea" id="RHEA:19993"/>
        <dbReference type="Rhea" id="RHEA-COMP:10698"/>
        <dbReference type="Rhea" id="RHEA-COMP:10700"/>
        <dbReference type="ChEBI" id="CHEBI:15377"/>
        <dbReference type="ChEBI" id="CHEBI:29950"/>
        <dbReference type="ChEBI" id="CHEBI:50058"/>
        <dbReference type="ChEBI" id="CHEBI:57844"/>
        <dbReference type="ChEBI" id="CHEBI:58772"/>
        <dbReference type="EC" id="1.8.4.11"/>
    </reaction>
</comment>
<comment type="similarity">
    <text evidence="1">Belongs to the MsrA Met sulfoxide reductase family.</text>
</comment>
<name>MSRA_BRUO2</name>
<sequence>MSFFDSYRKKMQMPSKEEVLPGRVQPIPTAAAHFVSGHPLKGPWPDGMKQVLFGMGCFWGAERLFWQVPGVYVTAVGYAGGITPNPTYEETCTGLTGHAEVVLVVYDPKVVTLNELLALFWEEHDPTQGMRQGNDIGTTYRSVIYTFNAVDRAVAEKSRDAYSQALASRGLGPVTTQIADAPDFYYAEDYHQQYLAKNPDGYCGLRGTGVSCPIPLAH</sequence>